<proteinExistence type="inferred from homology"/>
<feature type="chain" id="PRO_1000015508" description="Deoxyuridine 5'-triphosphate nucleotidohydrolase">
    <location>
        <begin position="1"/>
        <end position="148"/>
    </location>
</feature>
<feature type="binding site" evidence="1">
    <location>
        <begin position="68"/>
        <end position="70"/>
    </location>
    <ligand>
        <name>substrate</name>
    </ligand>
</feature>
<feature type="binding site" evidence="1">
    <location>
        <position position="81"/>
    </location>
    <ligand>
        <name>substrate</name>
    </ligand>
</feature>
<feature type="binding site" evidence="1">
    <location>
        <begin position="85"/>
        <end position="87"/>
    </location>
    <ligand>
        <name>substrate</name>
    </ligand>
</feature>
<feature type="binding site" evidence="1">
    <location>
        <position position="95"/>
    </location>
    <ligand>
        <name>substrate</name>
    </ligand>
</feature>
<name>DUT_RICCK</name>
<organism>
    <name type="scientific">Rickettsia canadensis (strain McKiel)</name>
    <dbReference type="NCBI Taxonomy" id="293613"/>
    <lineage>
        <taxon>Bacteria</taxon>
        <taxon>Pseudomonadati</taxon>
        <taxon>Pseudomonadota</taxon>
        <taxon>Alphaproteobacteria</taxon>
        <taxon>Rickettsiales</taxon>
        <taxon>Rickettsiaceae</taxon>
        <taxon>Rickettsieae</taxon>
        <taxon>Rickettsia</taxon>
        <taxon>belli group</taxon>
    </lineage>
</organism>
<evidence type="ECO:0000255" key="1">
    <source>
        <dbReference type="HAMAP-Rule" id="MF_00116"/>
    </source>
</evidence>
<accession>A8EZ30</accession>
<sequence length="148" mass="16244">MTITQFKIQKLENFFGSLPKYATEHSAGMDLIAANKQPIIIKIGEIQLIPTGIAIALPDLFEAQIRPRSGLAVKHGITVANSPGTIDSDYRGEIKVILINLGKEDFIIEKGMRIAQMIISKYERILWKESNTLEETVRGSGGFGSTGV</sequence>
<reference key="1">
    <citation type="submission" date="2007-09" db="EMBL/GenBank/DDBJ databases">
        <title>Complete genome sequence of Rickettsia canadensis.</title>
        <authorList>
            <person name="Madan A."/>
            <person name="Fahey J."/>
            <person name="Helton E."/>
            <person name="Ketteman M."/>
            <person name="Madan A."/>
            <person name="Rodrigues S."/>
            <person name="Sanchez A."/>
            <person name="Whiting M."/>
            <person name="Dasch G."/>
            <person name="Eremeeva M."/>
        </authorList>
    </citation>
    <scope>NUCLEOTIDE SEQUENCE [LARGE SCALE GENOMIC DNA]</scope>
    <source>
        <strain>McKiel</strain>
    </source>
</reference>
<comment type="function">
    <text evidence="1">This enzyme is involved in nucleotide metabolism: it produces dUMP, the immediate precursor of thymidine nucleotides and it decreases the intracellular concentration of dUTP so that uracil cannot be incorporated into DNA.</text>
</comment>
<comment type="catalytic activity">
    <reaction evidence="1">
        <text>dUTP + H2O = dUMP + diphosphate + H(+)</text>
        <dbReference type="Rhea" id="RHEA:10248"/>
        <dbReference type="ChEBI" id="CHEBI:15377"/>
        <dbReference type="ChEBI" id="CHEBI:15378"/>
        <dbReference type="ChEBI" id="CHEBI:33019"/>
        <dbReference type="ChEBI" id="CHEBI:61555"/>
        <dbReference type="ChEBI" id="CHEBI:246422"/>
        <dbReference type="EC" id="3.6.1.23"/>
    </reaction>
</comment>
<comment type="cofactor">
    <cofactor evidence="1">
        <name>Mg(2+)</name>
        <dbReference type="ChEBI" id="CHEBI:18420"/>
    </cofactor>
</comment>
<comment type="pathway">
    <text evidence="1">Pyrimidine metabolism; dUMP biosynthesis; dUMP from dCTP (dUTP route): step 2/2.</text>
</comment>
<comment type="similarity">
    <text evidence="1">Belongs to the dUTPase family.</text>
</comment>
<dbReference type="EC" id="3.6.1.23" evidence="1"/>
<dbReference type="EMBL" id="CP000409">
    <property type="protein sequence ID" value="ABV73613.1"/>
    <property type="molecule type" value="Genomic_DNA"/>
</dbReference>
<dbReference type="RefSeq" id="WP_012148808.1">
    <property type="nucleotide sequence ID" value="NC_009879.1"/>
</dbReference>
<dbReference type="SMR" id="A8EZ30"/>
<dbReference type="STRING" id="293613.A1E_03390"/>
<dbReference type="KEGG" id="rcm:A1E_03390"/>
<dbReference type="eggNOG" id="COG0756">
    <property type="taxonomic scope" value="Bacteria"/>
</dbReference>
<dbReference type="HOGENOM" id="CLU_068508_1_2_5"/>
<dbReference type="UniPathway" id="UPA00610">
    <property type="reaction ID" value="UER00666"/>
</dbReference>
<dbReference type="Proteomes" id="UP000007056">
    <property type="component" value="Chromosome"/>
</dbReference>
<dbReference type="GO" id="GO:0004170">
    <property type="term" value="F:dUTP diphosphatase activity"/>
    <property type="evidence" value="ECO:0007669"/>
    <property type="project" value="UniProtKB-UniRule"/>
</dbReference>
<dbReference type="GO" id="GO:0000287">
    <property type="term" value="F:magnesium ion binding"/>
    <property type="evidence" value="ECO:0007669"/>
    <property type="project" value="UniProtKB-UniRule"/>
</dbReference>
<dbReference type="GO" id="GO:0006226">
    <property type="term" value="P:dUMP biosynthetic process"/>
    <property type="evidence" value="ECO:0007669"/>
    <property type="project" value="UniProtKB-UniRule"/>
</dbReference>
<dbReference type="GO" id="GO:0046081">
    <property type="term" value="P:dUTP catabolic process"/>
    <property type="evidence" value="ECO:0007669"/>
    <property type="project" value="InterPro"/>
</dbReference>
<dbReference type="CDD" id="cd07557">
    <property type="entry name" value="trimeric_dUTPase"/>
    <property type="match status" value="1"/>
</dbReference>
<dbReference type="FunFam" id="2.70.40.10:FF:000002">
    <property type="entry name" value="dUTP diphosphatase"/>
    <property type="match status" value="1"/>
</dbReference>
<dbReference type="Gene3D" id="2.70.40.10">
    <property type="match status" value="1"/>
</dbReference>
<dbReference type="HAMAP" id="MF_00116">
    <property type="entry name" value="dUTPase_bact"/>
    <property type="match status" value="1"/>
</dbReference>
<dbReference type="InterPro" id="IPR008181">
    <property type="entry name" value="dUTPase"/>
</dbReference>
<dbReference type="InterPro" id="IPR029054">
    <property type="entry name" value="dUTPase-like"/>
</dbReference>
<dbReference type="InterPro" id="IPR036157">
    <property type="entry name" value="dUTPase-like_sf"/>
</dbReference>
<dbReference type="InterPro" id="IPR033704">
    <property type="entry name" value="dUTPase_trimeric"/>
</dbReference>
<dbReference type="NCBIfam" id="TIGR00576">
    <property type="entry name" value="dut"/>
    <property type="match status" value="1"/>
</dbReference>
<dbReference type="NCBIfam" id="NF001862">
    <property type="entry name" value="PRK00601.1"/>
    <property type="match status" value="1"/>
</dbReference>
<dbReference type="PANTHER" id="PTHR11241">
    <property type="entry name" value="DEOXYURIDINE 5'-TRIPHOSPHATE NUCLEOTIDOHYDROLASE"/>
    <property type="match status" value="1"/>
</dbReference>
<dbReference type="PANTHER" id="PTHR11241:SF0">
    <property type="entry name" value="DEOXYURIDINE 5'-TRIPHOSPHATE NUCLEOTIDOHYDROLASE"/>
    <property type="match status" value="1"/>
</dbReference>
<dbReference type="Pfam" id="PF00692">
    <property type="entry name" value="dUTPase"/>
    <property type="match status" value="1"/>
</dbReference>
<dbReference type="SUPFAM" id="SSF51283">
    <property type="entry name" value="dUTPase-like"/>
    <property type="match status" value="1"/>
</dbReference>
<gene>
    <name evidence="1" type="primary">dut</name>
    <name type="ordered locus">A1E_03390</name>
</gene>
<keyword id="KW-0378">Hydrolase</keyword>
<keyword id="KW-0460">Magnesium</keyword>
<keyword id="KW-0479">Metal-binding</keyword>
<keyword id="KW-0546">Nucleotide metabolism</keyword>
<protein>
    <recommendedName>
        <fullName evidence="1">Deoxyuridine 5'-triphosphate nucleotidohydrolase</fullName>
        <shortName evidence="1">dUTPase</shortName>
        <ecNumber evidence="1">3.6.1.23</ecNumber>
    </recommendedName>
    <alternativeName>
        <fullName evidence="1">dUTP pyrophosphatase</fullName>
    </alternativeName>
</protein>